<comment type="function">
    <text evidence="1">Hydrolyzes ribosome-free peptidyl-tRNAs (with 1 or more amino acids incorporated), which drop off the ribosome during protein synthesis, or as a result of ribosome stalling.</text>
</comment>
<comment type="function">
    <text evidence="1">Catalyzes the release of premature peptidyl moieties from peptidyl-tRNA molecules trapped in stalled 50S ribosomal subunits, and thus maintains levels of free tRNAs and 50S ribosomes.</text>
</comment>
<comment type="catalytic activity">
    <reaction evidence="1">
        <text>an N-acyl-L-alpha-aminoacyl-tRNA + H2O = an N-acyl-L-amino acid + a tRNA + H(+)</text>
        <dbReference type="Rhea" id="RHEA:54448"/>
        <dbReference type="Rhea" id="RHEA-COMP:10123"/>
        <dbReference type="Rhea" id="RHEA-COMP:13883"/>
        <dbReference type="ChEBI" id="CHEBI:15377"/>
        <dbReference type="ChEBI" id="CHEBI:15378"/>
        <dbReference type="ChEBI" id="CHEBI:59874"/>
        <dbReference type="ChEBI" id="CHEBI:78442"/>
        <dbReference type="ChEBI" id="CHEBI:138191"/>
        <dbReference type="EC" id="3.1.1.29"/>
    </reaction>
</comment>
<comment type="subunit">
    <text evidence="1">Monomer.</text>
</comment>
<comment type="subcellular location">
    <subcellularLocation>
        <location evidence="1">Cytoplasm</location>
    </subcellularLocation>
</comment>
<comment type="similarity">
    <text evidence="1">Belongs to the PTH family.</text>
</comment>
<organism>
    <name type="scientific">Parabacteroides distasonis (strain ATCC 8503 / DSM 20701 / CIP 104284 / JCM 5825 / NCTC 11152)</name>
    <dbReference type="NCBI Taxonomy" id="435591"/>
    <lineage>
        <taxon>Bacteria</taxon>
        <taxon>Pseudomonadati</taxon>
        <taxon>Bacteroidota</taxon>
        <taxon>Bacteroidia</taxon>
        <taxon>Bacteroidales</taxon>
        <taxon>Tannerellaceae</taxon>
        <taxon>Parabacteroides</taxon>
    </lineage>
</organism>
<evidence type="ECO:0000255" key="1">
    <source>
        <dbReference type="HAMAP-Rule" id="MF_00083"/>
    </source>
</evidence>
<proteinExistence type="inferred from homology"/>
<reference key="1">
    <citation type="journal article" date="2007" name="PLoS Biol.">
        <title>Evolution of symbiotic bacteria in the distal human intestine.</title>
        <authorList>
            <person name="Xu J."/>
            <person name="Mahowald M.A."/>
            <person name="Ley R.E."/>
            <person name="Lozupone C.A."/>
            <person name="Hamady M."/>
            <person name="Martens E.C."/>
            <person name="Henrissat B."/>
            <person name="Coutinho P.M."/>
            <person name="Minx P."/>
            <person name="Latreille P."/>
            <person name="Cordum H."/>
            <person name="Van Brunt A."/>
            <person name="Kim K."/>
            <person name="Fulton R.S."/>
            <person name="Fulton L.A."/>
            <person name="Clifton S.W."/>
            <person name="Wilson R.K."/>
            <person name="Knight R.D."/>
            <person name="Gordon J.I."/>
        </authorList>
    </citation>
    <scope>NUCLEOTIDE SEQUENCE [LARGE SCALE GENOMIC DNA]</scope>
    <source>
        <strain>ATCC 8503 / DSM 20701 / CIP 104284 / JCM 5825 / NCTC 11152</strain>
    </source>
</reference>
<protein>
    <recommendedName>
        <fullName evidence="1">Peptidyl-tRNA hydrolase</fullName>
        <shortName evidence="1">Pth</shortName>
        <ecNumber evidence="1">3.1.1.29</ecNumber>
    </recommendedName>
</protein>
<dbReference type="EC" id="3.1.1.29" evidence="1"/>
<dbReference type="EMBL" id="CP000140">
    <property type="protein sequence ID" value="ABR42117.1"/>
    <property type="molecule type" value="Genomic_DNA"/>
</dbReference>
<dbReference type="RefSeq" id="WP_005861960.1">
    <property type="nucleotide sequence ID" value="NZ_LR215978.1"/>
</dbReference>
<dbReference type="SMR" id="A6L8V3"/>
<dbReference type="STRING" id="435591.BDI_0332"/>
<dbReference type="PaxDb" id="435591-BDI_0332"/>
<dbReference type="KEGG" id="pdi:BDI_0332"/>
<dbReference type="eggNOG" id="COG0193">
    <property type="taxonomic scope" value="Bacteria"/>
</dbReference>
<dbReference type="HOGENOM" id="CLU_062456_4_1_10"/>
<dbReference type="BioCyc" id="PDIS435591:G1G5A-343-MONOMER"/>
<dbReference type="Proteomes" id="UP000000566">
    <property type="component" value="Chromosome"/>
</dbReference>
<dbReference type="GO" id="GO:0005737">
    <property type="term" value="C:cytoplasm"/>
    <property type="evidence" value="ECO:0007669"/>
    <property type="project" value="UniProtKB-SubCell"/>
</dbReference>
<dbReference type="GO" id="GO:0004045">
    <property type="term" value="F:peptidyl-tRNA hydrolase activity"/>
    <property type="evidence" value="ECO:0007669"/>
    <property type="project" value="UniProtKB-UniRule"/>
</dbReference>
<dbReference type="GO" id="GO:0000049">
    <property type="term" value="F:tRNA binding"/>
    <property type="evidence" value="ECO:0007669"/>
    <property type="project" value="UniProtKB-UniRule"/>
</dbReference>
<dbReference type="GO" id="GO:0006515">
    <property type="term" value="P:protein quality control for misfolded or incompletely synthesized proteins"/>
    <property type="evidence" value="ECO:0007669"/>
    <property type="project" value="UniProtKB-UniRule"/>
</dbReference>
<dbReference type="GO" id="GO:0072344">
    <property type="term" value="P:rescue of stalled ribosome"/>
    <property type="evidence" value="ECO:0007669"/>
    <property type="project" value="UniProtKB-UniRule"/>
</dbReference>
<dbReference type="CDD" id="cd00462">
    <property type="entry name" value="PTH"/>
    <property type="match status" value="1"/>
</dbReference>
<dbReference type="FunFam" id="3.40.50.1470:FF:000001">
    <property type="entry name" value="Peptidyl-tRNA hydrolase"/>
    <property type="match status" value="1"/>
</dbReference>
<dbReference type="Gene3D" id="3.40.50.1470">
    <property type="entry name" value="Peptidyl-tRNA hydrolase"/>
    <property type="match status" value="1"/>
</dbReference>
<dbReference type="HAMAP" id="MF_00083">
    <property type="entry name" value="Pept_tRNA_hydro_bact"/>
    <property type="match status" value="1"/>
</dbReference>
<dbReference type="InterPro" id="IPR001328">
    <property type="entry name" value="Pept_tRNA_hydro"/>
</dbReference>
<dbReference type="InterPro" id="IPR018171">
    <property type="entry name" value="Pept_tRNA_hydro_CS"/>
</dbReference>
<dbReference type="InterPro" id="IPR036416">
    <property type="entry name" value="Pept_tRNA_hydro_sf"/>
</dbReference>
<dbReference type="NCBIfam" id="TIGR00447">
    <property type="entry name" value="pth"/>
    <property type="match status" value="1"/>
</dbReference>
<dbReference type="PANTHER" id="PTHR17224">
    <property type="entry name" value="PEPTIDYL-TRNA HYDROLASE"/>
    <property type="match status" value="1"/>
</dbReference>
<dbReference type="PANTHER" id="PTHR17224:SF1">
    <property type="entry name" value="PEPTIDYL-TRNA HYDROLASE"/>
    <property type="match status" value="1"/>
</dbReference>
<dbReference type="Pfam" id="PF01195">
    <property type="entry name" value="Pept_tRNA_hydro"/>
    <property type="match status" value="1"/>
</dbReference>
<dbReference type="SUPFAM" id="SSF53178">
    <property type="entry name" value="Peptidyl-tRNA hydrolase-like"/>
    <property type="match status" value="1"/>
</dbReference>
<dbReference type="PROSITE" id="PS01195">
    <property type="entry name" value="PEPT_TRNA_HYDROL_1"/>
    <property type="match status" value="1"/>
</dbReference>
<dbReference type="PROSITE" id="PS01196">
    <property type="entry name" value="PEPT_TRNA_HYDROL_2"/>
    <property type="match status" value="1"/>
</dbReference>
<feature type="chain" id="PRO_1000010621" description="Peptidyl-tRNA hydrolase">
    <location>
        <begin position="1"/>
        <end position="187"/>
    </location>
</feature>
<feature type="active site" description="Proton acceptor" evidence="1">
    <location>
        <position position="20"/>
    </location>
</feature>
<feature type="binding site" evidence="1">
    <location>
        <position position="15"/>
    </location>
    <ligand>
        <name>tRNA</name>
        <dbReference type="ChEBI" id="CHEBI:17843"/>
    </ligand>
</feature>
<feature type="binding site" evidence="1">
    <location>
        <position position="64"/>
    </location>
    <ligand>
        <name>tRNA</name>
        <dbReference type="ChEBI" id="CHEBI:17843"/>
    </ligand>
</feature>
<feature type="binding site" evidence="1">
    <location>
        <position position="66"/>
    </location>
    <ligand>
        <name>tRNA</name>
        <dbReference type="ChEBI" id="CHEBI:17843"/>
    </ligand>
</feature>
<feature type="binding site" evidence="1">
    <location>
        <position position="112"/>
    </location>
    <ligand>
        <name>tRNA</name>
        <dbReference type="ChEBI" id="CHEBI:17843"/>
    </ligand>
</feature>
<feature type="site" description="Discriminates between blocked and unblocked aminoacyl-tRNA" evidence="1">
    <location>
        <position position="10"/>
    </location>
</feature>
<feature type="site" description="Stabilizes the basic form of H active site to accept a proton" evidence="1">
    <location>
        <position position="91"/>
    </location>
</feature>
<gene>
    <name evidence="1" type="primary">pth</name>
    <name type="ordered locus">BDI_0332</name>
</gene>
<accession>A6L8V3</accession>
<keyword id="KW-0963">Cytoplasm</keyword>
<keyword id="KW-0378">Hydrolase</keyword>
<keyword id="KW-1185">Reference proteome</keyword>
<keyword id="KW-0694">RNA-binding</keyword>
<keyword id="KW-0820">tRNA-binding</keyword>
<sequence length="187" mass="21023">MKYLITGLGNIGSEYWGTRHNIGFRVVNHLVESVGGNFTEERYGAIARIRVKNCDLIVLKPNTFMNLSGNAVRYWLQKENIPVENLLIVVDDLALPFGTLRLKPKGSDAGHNGLKNIAQLLNTQEYSRLRFGIGSDFPRGGQIDYVLGKFPPEELQLMPEILDRATEIIKSFCLAGIQITMNQFNNK</sequence>
<name>PTH_PARD8</name>